<feature type="chain" id="PRO_0000219172" description="N-acetyllactosaminide beta-1,3-N-acetylglucosaminyltransferase 3">
    <location>
        <begin position="1"/>
        <end position="372"/>
    </location>
</feature>
<feature type="topological domain" description="Cytoplasmic" evidence="1">
    <location>
        <begin position="1"/>
        <end position="10"/>
    </location>
</feature>
<feature type="transmembrane region" description="Helical; Signal-anchor for type II membrane protein" evidence="1">
    <location>
        <begin position="11"/>
        <end position="31"/>
    </location>
</feature>
<feature type="topological domain" description="Lumenal" evidence="1">
    <location>
        <begin position="32"/>
        <end position="372"/>
    </location>
</feature>
<feature type="glycosylation site" description="N-linked (GlcNAc...) asparagine" evidence="1">
    <location>
        <position position="64"/>
    </location>
</feature>
<feature type="glycosylation site" description="N-linked (GlcNAc...) asparagine" evidence="1">
    <location>
        <position position="184"/>
    </location>
</feature>
<feature type="glycosylation site" description="N-linked (GlcNAc...) asparagine" evidence="1">
    <location>
        <position position="202"/>
    </location>
</feature>
<feature type="glycosylation site" description="N-linked (GlcNAc...) asparagine" evidence="1">
    <location>
        <position position="362"/>
    </location>
</feature>
<feature type="glycosylation site" description="N-linked (GlcNAc...) asparagine" evidence="1">
    <location>
        <position position="367"/>
    </location>
</feature>
<feature type="sequence variant" id="VAR_074178" evidence="7">
    <original>I</original>
    <variation>F</variation>
    <location>
        <position position="317"/>
    </location>
</feature>
<feature type="sequence variant" id="VAR_022644" description="In dbSNP:rs36686." evidence="2 4 5 6 8 9">
    <original>R</original>
    <variation>H</variation>
    <location>
        <position position="328"/>
    </location>
</feature>
<feature type="sequence conflict" description="In Ref. 9; AAH66876." evidence="11" ref="9">
    <original>C</original>
    <variation>Y</variation>
    <location>
        <position position="89"/>
    </location>
</feature>
<feature type="sequence conflict" description="In Ref. 9; AAH67423." evidence="11" ref="9">
    <original>W</original>
    <variation>R</variation>
    <location>
        <position position="355"/>
    </location>
</feature>
<sequence length="372" mass="42534">MKYLRHRRPNATLILAIGAFTLLLFSLLVSPPTCKVQEQPPAIPEALAWPTPPTRPAPAPCHANTSMVTHPDFATQPQHVQNFLLYRHCRHFPLLQDVPPSKCAQPVFLLLVIKSSPSNYVRRELLRRTWGRERKVRGLQLRLLFLVGTASNPHEARKVNRLLELEAQTHGDILQWDFHDSFFNLTLKQVLFLQWQETRCANASFVLNGDDDVFAHTDNMVFYLQDHDPGRHLFVGQLIQNVGPIRAFWSKYYVPEVVTQNERYPPYCGGGGFLLSRFTAAALRRAAHVLDIFPIDDVFLGMCLELEGLKPASHSGIRTSGVRAPSQRLSSFDPCFYRDLLLVHRFLPYEMLLMWDALNQPNLTCGNQTQIY</sequence>
<dbReference type="EC" id="2.4.1.149" evidence="3"/>
<dbReference type="EC" id="2.4.1.146" evidence="4"/>
<dbReference type="EMBL" id="AB015630">
    <property type="protein sequence ID" value="BAA76497.1"/>
    <property type="molecule type" value="mRNA"/>
</dbReference>
<dbReference type="EMBL" id="AF293973">
    <property type="protein sequence ID" value="AAK00849.1"/>
    <property type="molecule type" value="mRNA"/>
</dbReference>
<dbReference type="EMBL" id="AB049585">
    <property type="protein sequence ID" value="BAB21531.1"/>
    <property type="molecule type" value="mRNA"/>
</dbReference>
<dbReference type="EMBL" id="AJ130847">
    <property type="protein sequence ID" value="CAC45044.1"/>
    <property type="molecule type" value="mRNA"/>
</dbReference>
<dbReference type="EMBL" id="AJ278961">
    <property type="protein sequence ID" value="CAC82374.1"/>
    <property type="status" value="ALT_FRAME"/>
    <property type="molecule type" value="mRNA"/>
</dbReference>
<dbReference type="EMBL" id="AY358955">
    <property type="protein sequence ID" value="AAQ89314.1"/>
    <property type="molecule type" value="mRNA"/>
</dbReference>
<dbReference type="EMBL" id="AK314323">
    <property type="protein sequence ID" value="BAG36971.1"/>
    <property type="molecule type" value="mRNA"/>
</dbReference>
<dbReference type="EMBL" id="AC008761">
    <property type="status" value="NOT_ANNOTATED_CDS"/>
    <property type="molecule type" value="Genomic_DNA"/>
</dbReference>
<dbReference type="EMBL" id="BC066876">
    <property type="protein sequence ID" value="AAH66876.1"/>
    <property type="molecule type" value="mRNA"/>
</dbReference>
<dbReference type="EMBL" id="BC067423">
    <property type="protein sequence ID" value="AAH67423.1"/>
    <property type="molecule type" value="mRNA"/>
</dbReference>
<dbReference type="CCDS" id="CCDS12364.1"/>
<dbReference type="RefSeq" id="NP_055071.2">
    <property type="nucleotide sequence ID" value="NM_014256.4"/>
</dbReference>
<dbReference type="RefSeq" id="XP_011525928.1">
    <property type="nucleotide sequence ID" value="XM_011527626.3"/>
</dbReference>
<dbReference type="RefSeq" id="XP_047293998.1">
    <property type="nucleotide sequence ID" value="XM_047438042.1"/>
</dbReference>
<dbReference type="SMR" id="Q9Y2A9"/>
<dbReference type="BioGRID" id="115614">
    <property type="interactions" value="139"/>
</dbReference>
<dbReference type="FunCoup" id="Q9Y2A9">
    <property type="interactions" value="310"/>
</dbReference>
<dbReference type="IntAct" id="Q9Y2A9">
    <property type="interactions" value="74"/>
</dbReference>
<dbReference type="STRING" id="9606.ENSP00000321874"/>
<dbReference type="BindingDB" id="Q9Y2A9"/>
<dbReference type="ChEMBL" id="CHEMBL3325305"/>
<dbReference type="CAZy" id="GT31">
    <property type="family name" value="Glycosyltransferase Family 31"/>
</dbReference>
<dbReference type="GlyCosmos" id="Q9Y2A9">
    <property type="glycosylation" value="5 sites, No reported glycans"/>
</dbReference>
<dbReference type="GlyGen" id="Q9Y2A9">
    <property type="glycosylation" value="6 sites"/>
</dbReference>
<dbReference type="iPTMnet" id="Q9Y2A9"/>
<dbReference type="PhosphoSitePlus" id="Q9Y2A9"/>
<dbReference type="SwissPalm" id="Q9Y2A9"/>
<dbReference type="BioMuta" id="B3GNT3"/>
<dbReference type="DMDM" id="311033352"/>
<dbReference type="jPOST" id="Q9Y2A9"/>
<dbReference type="MassIVE" id="Q9Y2A9"/>
<dbReference type="PaxDb" id="9606-ENSP00000321874"/>
<dbReference type="PeptideAtlas" id="Q9Y2A9"/>
<dbReference type="ProteomicsDB" id="85714"/>
<dbReference type="Antibodypedia" id="14471">
    <property type="antibodies" value="107 antibodies from 24 providers"/>
</dbReference>
<dbReference type="DNASU" id="10331"/>
<dbReference type="Ensembl" id="ENST00000318683.7">
    <property type="protein sequence ID" value="ENSP00000321874.5"/>
    <property type="gene ID" value="ENSG00000179913.11"/>
</dbReference>
<dbReference type="Ensembl" id="ENST00000595387.1">
    <property type="protein sequence ID" value="ENSP00000472638.1"/>
    <property type="gene ID" value="ENSG00000179913.11"/>
</dbReference>
<dbReference type="GeneID" id="10331"/>
<dbReference type="KEGG" id="hsa:10331"/>
<dbReference type="MANE-Select" id="ENST00000318683.7">
    <property type="protein sequence ID" value="ENSP00000321874.5"/>
    <property type="RefSeq nucleotide sequence ID" value="NM_014256.4"/>
    <property type="RefSeq protein sequence ID" value="NP_055071.2"/>
</dbReference>
<dbReference type="UCSC" id="uc002nhl.2">
    <property type="organism name" value="human"/>
</dbReference>
<dbReference type="AGR" id="HGNC:13528"/>
<dbReference type="CTD" id="10331"/>
<dbReference type="DisGeNET" id="10331"/>
<dbReference type="GeneCards" id="B3GNT3"/>
<dbReference type="HGNC" id="HGNC:13528">
    <property type="gene designation" value="B3GNT3"/>
</dbReference>
<dbReference type="HPA" id="ENSG00000179913">
    <property type="expression patterns" value="Tissue enhanced (intestine, salivary gland, stomach)"/>
</dbReference>
<dbReference type="MIM" id="605863">
    <property type="type" value="gene"/>
</dbReference>
<dbReference type="neXtProt" id="NX_Q9Y2A9"/>
<dbReference type="OpenTargets" id="ENSG00000179913"/>
<dbReference type="PharmGKB" id="PA25219"/>
<dbReference type="VEuPathDB" id="HostDB:ENSG00000179913"/>
<dbReference type="eggNOG" id="KOG2287">
    <property type="taxonomic scope" value="Eukaryota"/>
</dbReference>
<dbReference type="GeneTree" id="ENSGT00940000159134"/>
<dbReference type="HOGENOM" id="CLU_036849_5_1_1"/>
<dbReference type="InParanoid" id="Q9Y2A9"/>
<dbReference type="OMA" id="VSYLQGH"/>
<dbReference type="OrthoDB" id="2139606at2759"/>
<dbReference type="PAN-GO" id="Q9Y2A9">
    <property type="GO annotations" value="3 GO annotations based on evolutionary models"/>
</dbReference>
<dbReference type="PhylomeDB" id="Q9Y2A9"/>
<dbReference type="TreeFam" id="TF318639"/>
<dbReference type="BioCyc" id="MetaCyc:ENSG00000179913-MONOMER"/>
<dbReference type="BRENDA" id="2.4.1.146">
    <property type="organism ID" value="2681"/>
</dbReference>
<dbReference type="BRENDA" id="2.4.1.149">
    <property type="organism ID" value="2681"/>
</dbReference>
<dbReference type="BRENDA" id="2.4.99.6">
    <property type="organism ID" value="2681"/>
</dbReference>
<dbReference type="PathwayCommons" id="Q9Y2A9"/>
<dbReference type="Reactome" id="R-HSA-2022854">
    <property type="pathway name" value="Keratan sulfate biosynthesis"/>
</dbReference>
<dbReference type="Reactome" id="R-HSA-913709">
    <property type="pathway name" value="O-linked glycosylation of mucins"/>
</dbReference>
<dbReference type="SignaLink" id="Q9Y2A9"/>
<dbReference type="SIGNOR" id="Q9Y2A9"/>
<dbReference type="UniPathway" id="UPA00378"/>
<dbReference type="BioGRID-ORCS" id="10331">
    <property type="hits" value="37 hits in 1142 CRISPR screens"/>
</dbReference>
<dbReference type="ChiTaRS" id="B3GNT3">
    <property type="organism name" value="human"/>
</dbReference>
<dbReference type="GeneWiki" id="Beta-1,3-N-acetylglucosaminyltransferase_3"/>
<dbReference type="GenomeRNAi" id="10331"/>
<dbReference type="Pharos" id="Q9Y2A9">
    <property type="development level" value="Tbio"/>
</dbReference>
<dbReference type="PRO" id="PR:Q9Y2A9"/>
<dbReference type="Proteomes" id="UP000005640">
    <property type="component" value="Chromosome 19"/>
</dbReference>
<dbReference type="RNAct" id="Q9Y2A9">
    <property type="molecule type" value="protein"/>
</dbReference>
<dbReference type="Bgee" id="ENSG00000179913">
    <property type="expression patterns" value="Expressed in mucosa of transverse colon and 95 other cell types or tissues"/>
</dbReference>
<dbReference type="ExpressionAtlas" id="Q9Y2A9">
    <property type="expression patterns" value="baseline and differential"/>
</dbReference>
<dbReference type="GO" id="GO:0000139">
    <property type="term" value="C:Golgi membrane"/>
    <property type="evidence" value="ECO:0000318"/>
    <property type="project" value="GO_Central"/>
</dbReference>
<dbReference type="GO" id="GO:0005886">
    <property type="term" value="C:plasma membrane"/>
    <property type="evidence" value="ECO:0000304"/>
    <property type="project" value="ProtInc"/>
</dbReference>
<dbReference type="GO" id="GO:0047223">
    <property type="term" value="F:beta-1,3-galactosyl-O-glycosyl-glycoprotein beta-1,3-N-acetylglucosaminyltransferase activity"/>
    <property type="evidence" value="ECO:0007669"/>
    <property type="project" value="UniProtKB-EC"/>
</dbReference>
<dbReference type="GO" id="GO:0008499">
    <property type="term" value="F:N-acetyl-beta-D-glucosaminide beta-(1,3)-galactosyltransferase activity"/>
    <property type="evidence" value="ECO:0000304"/>
    <property type="project" value="Reactome"/>
</dbReference>
<dbReference type="GO" id="GO:0008532">
    <property type="term" value="F:N-acetyllactosaminide beta-1,3-N-acetylglucosaminyltransferase activity"/>
    <property type="evidence" value="ECO:0000314"/>
    <property type="project" value="UniProtKB"/>
</dbReference>
<dbReference type="GO" id="GO:0018146">
    <property type="term" value="P:keratan sulfate proteoglycan biosynthetic process"/>
    <property type="evidence" value="ECO:0000304"/>
    <property type="project" value="Reactome"/>
</dbReference>
<dbReference type="GO" id="GO:0016266">
    <property type="term" value="P:O-glycan processing"/>
    <property type="evidence" value="ECO:0000304"/>
    <property type="project" value="Reactome"/>
</dbReference>
<dbReference type="GO" id="GO:0030311">
    <property type="term" value="P:poly-N-acetyllactosamine biosynthetic process"/>
    <property type="evidence" value="ECO:0000314"/>
    <property type="project" value="UniProtKB"/>
</dbReference>
<dbReference type="GO" id="GO:0006493">
    <property type="term" value="P:protein O-linked glycosylation"/>
    <property type="evidence" value="ECO:0000318"/>
    <property type="project" value="GO_Central"/>
</dbReference>
<dbReference type="FunFam" id="3.90.550.50:FF:000009">
    <property type="entry name" value="Hexosyltransferase"/>
    <property type="match status" value="1"/>
</dbReference>
<dbReference type="Gene3D" id="3.90.550.50">
    <property type="match status" value="1"/>
</dbReference>
<dbReference type="InterPro" id="IPR002659">
    <property type="entry name" value="Glyco_trans_31"/>
</dbReference>
<dbReference type="PANTHER" id="PTHR11214">
    <property type="entry name" value="BETA-1,3-N-ACETYLGLUCOSAMINYLTRANSFERASE"/>
    <property type="match status" value="1"/>
</dbReference>
<dbReference type="PANTHER" id="PTHR11214:SF23">
    <property type="entry name" value="N-ACETYLLACTOSAMINIDE BETA-1,3-N-ACETYLGLUCOSAMINYLTRANSFERASE 3"/>
    <property type="match status" value="1"/>
</dbReference>
<dbReference type="Pfam" id="PF01762">
    <property type="entry name" value="Galactosyl_T"/>
    <property type="match status" value="1"/>
</dbReference>
<gene>
    <name type="primary">B3GNT3</name>
    <name type="synonym">B3GALT8</name>
    <name type="synonym">TMEM3</name>
    <name type="ORF">UNQ637/PRO1266</name>
</gene>
<accession>Q9Y2A9</accession>
<accession>B2RAS4</accession>
<accession>Q6NWU9</accession>
<accession>Q6NXU9</accession>
<accession>Q8WWR6</accession>
<accession>Q9C0J2</accession>
<evidence type="ECO:0000255" key="1"/>
<evidence type="ECO:0000269" key="2">
    <source>
    </source>
</evidence>
<evidence type="ECO:0000269" key="3">
    <source>
    </source>
</evidence>
<evidence type="ECO:0000269" key="4">
    <source>
    </source>
</evidence>
<evidence type="ECO:0000269" key="5">
    <source>
    </source>
</evidence>
<evidence type="ECO:0000269" key="6">
    <source>
    </source>
</evidence>
<evidence type="ECO:0000269" key="7">
    <source>
    </source>
</evidence>
<evidence type="ECO:0000269" key="8">
    <source ref="4"/>
</evidence>
<evidence type="ECO:0000269" key="9">
    <source ref="5"/>
</evidence>
<evidence type="ECO:0000303" key="10">
    <source>
    </source>
</evidence>
<evidence type="ECO:0000305" key="11"/>
<reference key="1">
    <citation type="journal article" date="1999" name="Gene">
        <title>Selection of cDNAs encoding putative type II membrane proteins on the cell surface from a human full-length cDNA bank.</title>
        <authorList>
            <person name="Yokoyama-Kobayashi M."/>
            <person name="Yamaguchi T."/>
            <person name="Sekine S."/>
            <person name="Kato S."/>
        </authorList>
    </citation>
    <scope>NUCLEOTIDE SEQUENCE [MRNA]</scope>
    <scope>VARIANT HIS-328</scope>
</reference>
<reference key="2">
    <citation type="journal article" date="2001" name="Cell">
        <title>Novel sulfated lymphocyte homing receptors and their control by a Core1 extension beta 1,3-N-acetylglucosaminyltransferase.</title>
        <authorList>
            <person name="Yeh J.-C."/>
            <person name="Hiraoka N."/>
            <person name="Petryniak B."/>
            <person name="Nakayama J."/>
            <person name="Ellies L.G."/>
            <person name="Rabuka D."/>
            <person name="Hindsgaul O."/>
            <person name="Marth J.D."/>
            <person name="Lowe J.B."/>
            <person name="Fukuda M."/>
        </authorList>
    </citation>
    <scope>NUCLEOTIDE SEQUENCE [MRNA]</scope>
    <scope>FUNCTION</scope>
    <scope>CATALYTIC ACTIVITY</scope>
    <scope>VARIANT HIS-328</scope>
</reference>
<reference key="3">
    <citation type="journal article" date="2001" name="J. Biol. Chem.">
        <title>Identification and characterization of three novel beta 1,3-N-acetylglucosaminyltransferases structurally related to the beta 1,3-galactosyltransferase family.</title>
        <authorList>
            <person name="Shiraishi N."/>
            <person name="Natsume A."/>
            <person name="Togayachi A."/>
            <person name="Endo T."/>
            <person name="Akashima T."/>
            <person name="Yamada Y."/>
            <person name="Imai N."/>
            <person name="Nakagawa S."/>
            <person name="Koizumi S."/>
            <person name="Sekine S."/>
            <person name="Narimatsu H."/>
            <person name="Sasaki K."/>
        </authorList>
    </citation>
    <scope>NUCLEOTIDE SEQUENCE [MRNA]</scope>
    <scope>CATALYTIC ACTIVITY</scope>
    <scope>FUNCTION</scope>
    <scope>TISSUE SPECIFICITY</scope>
    <source>
        <tissue>Gastric mucosa</tissue>
    </source>
</reference>
<reference key="4">
    <citation type="submission" date="1998-11" db="EMBL/GenBank/DDBJ databases">
        <title>Cloning of a new member of the beta 1,3 galactosyltransferase family, b1,3Gal-T6.</title>
        <authorList>
            <person name="Jensen M.A."/>
            <person name="Bennett E.P."/>
        </authorList>
    </citation>
    <scope>NUCLEOTIDE SEQUENCE [MRNA]</scope>
    <scope>VARIANT HIS-328</scope>
</reference>
<reference key="5">
    <citation type="submission" date="2000-09" db="EMBL/GenBank/DDBJ databases">
        <authorList>
            <person name="Bennett E.P."/>
        </authorList>
    </citation>
    <scope>NUCLEOTIDE SEQUENCE [MRNA]</scope>
    <scope>VARIANT HIS-328</scope>
</reference>
<reference key="6">
    <citation type="journal article" date="2003" name="Genome Res.">
        <title>The secreted protein discovery initiative (SPDI), a large-scale effort to identify novel human secreted and transmembrane proteins: a bioinformatics assessment.</title>
        <authorList>
            <person name="Clark H.F."/>
            <person name="Gurney A.L."/>
            <person name="Abaya E."/>
            <person name="Baker K."/>
            <person name="Baldwin D.T."/>
            <person name="Brush J."/>
            <person name="Chen J."/>
            <person name="Chow B."/>
            <person name="Chui C."/>
            <person name="Crowley C."/>
            <person name="Currell B."/>
            <person name="Deuel B."/>
            <person name="Dowd P."/>
            <person name="Eaton D."/>
            <person name="Foster J.S."/>
            <person name="Grimaldi C."/>
            <person name="Gu Q."/>
            <person name="Hass P.E."/>
            <person name="Heldens S."/>
            <person name="Huang A."/>
            <person name="Kim H.S."/>
            <person name="Klimowski L."/>
            <person name="Jin Y."/>
            <person name="Johnson S."/>
            <person name="Lee J."/>
            <person name="Lewis L."/>
            <person name="Liao D."/>
            <person name="Mark M.R."/>
            <person name="Robbie E."/>
            <person name="Sanchez C."/>
            <person name="Schoenfeld J."/>
            <person name="Seshagiri S."/>
            <person name="Simmons L."/>
            <person name="Singh J."/>
            <person name="Smith V."/>
            <person name="Stinson J."/>
            <person name="Vagts A."/>
            <person name="Vandlen R.L."/>
            <person name="Watanabe C."/>
            <person name="Wieand D."/>
            <person name="Woods K."/>
            <person name="Xie M.-H."/>
            <person name="Yansura D.G."/>
            <person name="Yi S."/>
            <person name="Yu G."/>
            <person name="Yuan J."/>
            <person name="Zhang M."/>
            <person name="Zhang Z."/>
            <person name="Goddard A.D."/>
            <person name="Wood W.I."/>
            <person name="Godowski P.J."/>
            <person name="Gray A.M."/>
        </authorList>
    </citation>
    <scope>NUCLEOTIDE SEQUENCE [LARGE SCALE MRNA]</scope>
    <scope>VARIANT HIS-328</scope>
</reference>
<reference key="7">
    <citation type="journal article" date="2004" name="Nat. Genet.">
        <title>Complete sequencing and characterization of 21,243 full-length human cDNAs.</title>
        <authorList>
            <person name="Ota T."/>
            <person name="Suzuki Y."/>
            <person name="Nishikawa T."/>
            <person name="Otsuki T."/>
            <person name="Sugiyama T."/>
            <person name="Irie R."/>
            <person name="Wakamatsu A."/>
            <person name="Hayashi K."/>
            <person name="Sato H."/>
            <person name="Nagai K."/>
            <person name="Kimura K."/>
            <person name="Makita H."/>
            <person name="Sekine M."/>
            <person name="Obayashi M."/>
            <person name="Nishi T."/>
            <person name="Shibahara T."/>
            <person name="Tanaka T."/>
            <person name="Ishii S."/>
            <person name="Yamamoto J."/>
            <person name="Saito K."/>
            <person name="Kawai Y."/>
            <person name="Isono Y."/>
            <person name="Nakamura Y."/>
            <person name="Nagahari K."/>
            <person name="Murakami K."/>
            <person name="Yasuda T."/>
            <person name="Iwayanagi T."/>
            <person name="Wagatsuma M."/>
            <person name="Shiratori A."/>
            <person name="Sudo H."/>
            <person name="Hosoiri T."/>
            <person name="Kaku Y."/>
            <person name="Kodaira H."/>
            <person name="Kondo H."/>
            <person name="Sugawara M."/>
            <person name="Takahashi M."/>
            <person name="Kanda K."/>
            <person name="Yokoi T."/>
            <person name="Furuya T."/>
            <person name="Kikkawa E."/>
            <person name="Omura Y."/>
            <person name="Abe K."/>
            <person name="Kamihara K."/>
            <person name="Katsuta N."/>
            <person name="Sato K."/>
            <person name="Tanikawa M."/>
            <person name="Yamazaki M."/>
            <person name="Ninomiya K."/>
            <person name="Ishibashi T."/>
            <person name="Yamashita H."/>
            <person name="Murakawa K."/>
            <person name="Fujimori K."/>
            <person name="Tanai H."/>
            <person name="Kimata M."/>
            <person name="Watanabe M."/>
            <person name="Hiraoka S."/>
            <person name="Chiba Y."/>
            <person name="Ishida S."/>
            <person name="Ono Y."/>
            <person name="Takiguchi S."/>
            <person name="Watanabe S."/>
            <person name="Yosida M."/>
            <person name="Hotuta T."/>
            <person name="Kusano J."/>
            <person name="Kanehori K."/>
            <person name="Takahashi-Fujii A."/>
            <person name="Hara H."/>
            <person name="Tanase T.-O."/>
            <person name="Nomura Y."/>
            <person name="Togiya S."/>
            <person name="Komai F."/>
            <person name="Hara R."/>
            <person name="Takeuchi K."/>
            <person name="Arita M."/>
            <person name="Imose N."/>
            <person name="Musashino K."/>
            <person name="Yuuki H."/>
            <person name="Oshima A."/>
            <person name="Sasaki N."/>
            <person name="Aotsuka S."/>
            <person name="Yoshikawa Y."/>
            <person name="Matsunawa H."/>
            <person name="Ichihara T."/>
            <person name="Shiohata N."/>
            <person name="Sano S."/>
            <person name="Moriya S."/>
            <person name="Momiyama H."/>
            <person name="Satoh N."/>
            <person name="Takami S."/>
            <person name="Terashima Y."/>
            <person name="Suzuki O."/>
            <person name="Nakagawa S."/>
            <person name="Senoh A."/>
            <person name="Mizoguchi H."/>
            <person name="Goto Y."/>
            <person name="Shimizu F."/>
            <person name="Wakebe H."/>
            <person name="Hishigaki H."/>
            <person name="Watanabe T."/>
            <person name="Sugiyama A."/>
            <person name="Takemoto M."/>
            <person name="Kawakami B."/>
            <person name="Yamazaki M."/>
            <person name="Watanabe K."/>
            <person name="Kumagai A."/>
            <person name="Itakura S."/>
            <person name="Fukuzumi Y."/>
            <person name="Fujimori Y."/>
            <person name="Komiyama M."/>
            <person name="Tashiro H."/>
            <person name="Tanigami A."/>
            <person name="Fujiwara T."/>
            <person name="Ono T."/>
            <person name="Yamada K."/>
            <person name="Fujii Y."/>
            <person name="Ozaki K."/>
            <person name="Hirao M."/>
            <person name="Ohmori Y."/>
            <person name="Kawabata A."/>
            <person name="Hikiji T."/>
            <person name="Kobatake N."/>
            <person name="Inagaki H."/>
            <person name="Ikema Y."/>
            <person name="Okamoto S."/>
            <person name="Okitani R."/>
            <person name="Kawakami T."/>
            <person name="Noguchi S."/>
            <person name="Itoh T."/>
            <person name="Shigeta K."/>
            <person name="Senba T."/>
            <person name="Matsumura K."/>
            <person name="Nakajima Y."/>
            <person name="Mizuno T."/>
            <person name="Morinaga M."/>
            <person name="Sasaki M."/>
            <person name="Togashi T."/>
            <person name="Oyama M."/>
            <person name="Hata H."/>
            <person name="Watanabe M."/>
            <person name="Komatsu T."/>
            <person name="Mizushima-Sugano J."/>
            <person name="Satoh T."/>
            <person name="Shirai Y."/>
            <person name="Takahashi Y."/>
            <person name="Nakagawa K."/>
            <person name="Okumura K."/>
            <person name="Nagase T."/>
            <person name="Nomura N."/>
            <person name="Kikuchi H."/>
            <person name="Masuho Y."/>
            <person name="Yamashita R."/>
            <person name="Nakai K."/>
            <person name="Yada T."/>
            <person name="Nakamura Y."/>
            <person name="Ohara O."/>
            <person name="Isogai T."/>
            <person name="Sugano S."/>
        </authorList>
    </citation>
    <scope>NUCLEOTIDE SEQUENCE [LARGE SCALE MRNA]</scope>
    <source>
        <tissue>Placenta</tissue>
    </source>
</reference>
<reference key="8">
    <citation type="journal article" date="2004" name="Nature">
        <title>The DNA sequence and biology of human chromosome 19.</title>
        <authorList>
            <person name="Grimwood J."/>
            <person name="Gordon L.A."/>
            <person name="Olsen A.S."/>
            <person name="Terry A."/>
            <person name="Schmutz J."/>
            <person name="Lamerdin J.E."/>
            <person name="Hellsten U."/>
            <person name="Goodstein D."/>
            <person name="Couronne O."/>
            <person name="Tran-Gyamfi M."/>
            <person name="Aerts A."/>
            <person name="Altherr M."/>
            <person name="Ashworth L."/>
            <person name="Bajorek E."/>
            <person name="Black S."/>
            <person name="Branscomb E."/>
            <person name="Caenepeel S."/>
            <person name="Carrano A.V."/>
            <person name="Caoile C."/>
            <person name="Chan Y.M."/>
            <person name="Christensen M."/>
            <person name="Cleland C.A."/>
            <person name="Copeland A."/>
            <person name="Dalin E."/>
            <person name="Dehal P."/>
            <person name="Denys M."/>
            <person name="Detter J.C."/>
            <person name="Escobar J."/>
            <person name="Flowers D."/>
            <person name="Fotopulos D."/>
            <person name="Garcia C."/>
            <person name="Georgescu A.M."/>
            <person name="Glavina T."/>
            <person name="Gomez M."/>
            <person name="Gonzales E."/>
            <person name="Groza M."/>
            <person name="Hammon N."/>
            <person name="Hawkins T."/>
            <person name="Haydu L."/>
            <person name="Ho I."/>
            <person name="Huang W."/>
            <person name="Israni S."/>
            <person name="Jett J."/>
            <person name="Kadner K."/>
            <person name="Kimball H."/>
            <person name="Kobayashi A."/>
            <person name="Larionov V."/>
            <person name="Leem S.-H."/>
            <person name="Lopez F."/>
            <person name="Lou Y."/>
            <person name="Lowry S."/>
            <person name="Malfatti S."/>
            <person name="Martinez D."/>
            <person name="McCready P.M."/>
            <person name="Medina C."/>
            <person name="Morgan J."/>
            <person name="Nelson K."/>
            <person name="Nolan M."/>
            <person name="Ovcharenko I."/>
            <person name="Pitluck S."/>
            <person name="Pollard M."/>
            <person name="Popkie A.P."/>
            <person name="Predki P."/>
            <person name="Quan G."/>
            <person name="Ramirez L."/>
            <person name="Rash S."/>
            <person name="Retterer J."/>
            <person name="Rodriguez A."/>
            <person name="Rogers S."/>
            <person name="Salamov A."/>
            <person name="Salazar A."/>
            <person name="She X."/>
            <person name="Smith D."/>
            <person name="Slezak T."/>
            <person name="Solovyev V."/>
            <person name="Thayer N."/>
            <person name="Tice H."/>
            <person name="Tsai M."/>
            <person name="Ustaszewska A."/>
            <person name="Vo N."/>
            <person name="Wagner M."/>
            <person name="Wheeler J."/>
            <person name="Wu K."/>
            <person name="Xie G."/>
            <person name="Yang J."/>
            <person name="Dubchak I."/>
            <person name="Furey T.S."/>
            <person name="DeJong P."/>
            <person name="Dickson M."/>
            <person name="Gordon D."/>
            <person name="Eichler E.E."/>
            <person name="Pennacchio L.A."/>
            <person name="Richardson P."/>
            <person name="Stubbs L."/>
            <person name="Rokhsar D.S."/>
            <person name="Myers R.M."/>
            <person name="Rubin E.M."/>
            <person name="Lucas S.M."/>
        </authorList>
    </citation>
    <scope>NUCLEOTIDE SEQUENCE [LARGE SCALE GENOMIC DNA]</scope>
</reference>
<reference key="9">
    <citation type="journal article" date="2004" name="Genome Res.">
        <title>The status, quality, and expansion of the NIH full-length cDNA project: the Mammalian Gene Collection (MGC).</title>
        <authorList>
            <consortium name="The MGC Project Team"/>
        </authorList>
    </citation>
    <scope>NUCLEOTIDE SEQUENCE [LARGE SCALE MRNA]</scope>
    <scope>VARIANT HIS-328</scope>
</reference>
<reference key="10">
    <citation type="journal article" date="1999" name="Biochim. Biophys. Acta">
        <title>Identification and characterization of large galactosyltransferase gene families: galactosyltransferases for all functions.</title>
        <authorList>
            <person name="Amado M."/>
            <person name="Almeida R."/>
            <person name="Schwientek T."/>
            <person name="Clausen H."/>
        </authorList>
    </citation>
    <scope>REVIEW</scope>
</reference>
<reference key="11">
    <citation type="journal article" date="2015" name="Proc. Natl. Acad. Sci. U.S.A.">
        <title>Neomorphic effects of recurrent somatic mutations in Yin Yang 1 in insulin-producing adenomas.</title>
        <authorList>
            <person name="Cromer M.K."/>
            <person name="Choi M."/>
            <person name="Nelson-Williams C."/>
            <person name="Fonseca A.L."/>
            <person name="Kunstman J.W."/>
            <person name="Korah R.M."/>
            <person name="Overton J.D."/>
            <person name="Mane S."/>
            <person name="Kenney B."/>
            <person name="Malchoff C.D."/>
            <person name="Stalberg P."/>
            <person name="Akerstroem G."/>
            <person name="Westin G."/>
            <person name="Hellman P."/>
            <person name="Carling T."/>
            <person name="Bjoerklund P."/>
            <person name="Lifton R.P."/>
        </authorList>
    </citation>
    <scope>VARIANT PHE-317</scope>
</reference>
<name>B3GN3_HUMAN</name>
<organism>
    <name type="scientific">Homo sapiens</name>
    <name type="common">Human</name>
    <dbReference type="NCBI Taxonomy" id="9606"/>
    <lineage>
        <taxon>Eukaryota</taxon>
        <taxon>Metazoa</taxon>
        <taxon>Chordata</taxon>
        <taxon>Craniata</taxon>
        <taxon>Vertebrata</taxon>
        <taxon>Euteleostomi</taxon>
        <taxon>Mammalia</taxon>
        <taxon>Eutheria</taxon>
        <taxon>Euarchontoglires</taxon>
        <taxon>Primates</taxon>
        <taxon>Haplorrhini</taxon>
        <taxon>Catarrhini</taxon>
        <taxon>Hominidae</taxon>
        <taxon>Homo</taxon>
    </lineage>
</organism>
<comment type="function">
    <text evidence="3 4">Beta-1,3-N-acetylglucosaminyltransferase involved in the synthesis of poly-N-acetyllactosamine. Has activity for type 2 oligosaccharides (PubMed:11042166). Also acts as a core1-1,3-N-acetylglucosaminyltransferase (Core1-beta3GlcNAcT) to form the 6-sulfo sialyl Lewis x on extended core1 O-glycans (PubMed:11439191).</text>
</comment>
<comment type="catalytic activity">
    <reaction evidence="4">
        <text>a 3-O-{beta-D-galactosyl-(1-&gt;3)-[N-acetyl-beta-D-glucosaminyl-(1-&gt;6)]-N-acetyl-alpha-D-galactosaminyl}-L-threonyl-[protein] + UDP-N-acetyl-alpha-D-glucosamine = 3-O-{beta-D-GlcNAc-(1-&gt;3)-beta-D-Gal-(1-&gt;3)-[beta-D-GlcNAc-(1-&gt;6)]-alpha-D-GalNAc}-L-threonyl-[protein] + UDP + H(+)</text>
        <dbReference type="Rhea" id="RHEA:56224"/>
        <dbReference type="Rhea" id="RHEA-COMP:14420"/>
        <dbReference type="Rhea" id="RHEA-COMP:14422"/>
        <dbReference type="ChEBI" id="CHEBI:15378"/>
        <dbReference type="ChEBI" id="CHEBI:57705"/>
        <dbReference type="ChEBI" id="CHEBI:58223"/>
        <dbReference type="ChEBI" id="CHEBI:139607"/>
        <dbReference type="ChEBI" id="CHEBI:139612"/>
        <dbReference type="EC" id="2.4.1.146"/>
    </reaction>
</comment>
<comment type="catalytic activity">
    <reaction evidence="4">
        <text>3-O-{beta-D-galactosyl-(1-&gt;3)-[N-acetyl-beta-D-glucosaminyl-(1-&gt;6)]-N-acetyl-alpha-D-galactosaminyl}-L-seryl-[protein] + UDP-N-acetyl-alpha-D-glucosamine = 3-O-{beta-D-GlcNAc-(1-&gt;3)-beta-D-Gal-(1-&gt;3)-[beta-D-GlcNAc-(1-&gt;6)]-alpha-D-GalNAc}-L-seryl-[protein] + UDP + H(+)</text>
        <dbReference type="Rhea" id="RHEA:56220"/>
        <dbReference type="Rhea" id="RHEA-COMP:14419"/>
        <dbReference type="Rhea" id="RHEA-COMP:14421"/>
        <dbReference type="ChEBI" id="CHEBI:15378"/>
        <dbReference type="ChEBI" id="CHEBI:57705"/>
        <dbReference type="ChEBI" id="CHEBI:58223"/>
        <dbReference type="ChEBI" id="CHEBI:139605"/>
        <dbReference type="ChEBI" id="CHEBI:139611"/>
        <dbReference type="EC" id="2.4.1.146"/>
    </reaction>
</comment>
<comment type="catalytic activity">
    <reaction evidence="3">
        <text>a beta-D-galactosyl-(1-&gt;4)-N-acetyl-beta-D-glucosaminyl derivative + UDP-N-acetyl-alpha-D-glucosamine = an N-acetyl-beta-D-glucosaminyl-(1-&gt;3)-beta-D-galactosyl-(1-&gt;4)-N-acetyl-beta-D-glucosaminyl derivative + UDP + H(+)</text>
        <dbReference type="Rhea" id="RHEA:14389"/>
        <dbReference type="ChEBI" id="CHEBI:15378"/>
        <dbReference type="ChEBI" id="CHEBI:57705"/>
        <dbReference type="ChEBI" id="CHEBI:58223"/>
        <dbReference type="ChEBI" id="CHEBI:133507"/>
        <dbReference type="ChEBI" id="CHEBI:134090"/>
        <dbReference type="EC" id="2.4.1.149"/>
    </reaction>
</comment>
<comment type="pathway">
    <text>Protein modification; protein glycosylation.</text>
</comment>
<comment type="subcellular location">
    <subcellularLocation>
        <location evidence="11">Golgi apparatus membrane</location>
        <topology evidence="11">Single-pass type II membrane protein</topology>
    </subcellularLocation>
</comment>
<comment type="tissue specificity">
    <text evidence="3">Expressed in colon, jejunum, stomach, esophagus, placenta and trachea.</text>
</comment>
<comment type="similarity">
    <text evidence="11">Belongs to the glycosyltransferase 31 family.</text>
</comment>
<comment type="sequence caution" evidence="11">
    <conflict type="frameshift">
        <sequence resource="EMBL-CDS" id="CAC82374"/>
    </conflict>
</comment>
<comment type="online information" name="Functional Glycomics Gateway - GTase">
    <link uri="http://www.functionalglycomics.org/glycomics/molecule/jsp/glycoEnzyme/viewGlycoEnzyme.jsp?gbpId=gt_hum_536"/>
    <text>UDP-GlcNAc:betaGal beta-1,3-N-acetylglucosaminyltransferase 3</text>
</comment>
<protein>
    <recommendedName>
        <fullName>N-acetyllactosaminide beta-1,3-N-acetylglucosaminyltransferase 3</fullName>
        <ecNumber evidence="3">2.4.1.149</ecNumber>
    </recommendedName>
    <alternativeName>
        <fullName>Beta-1,3-galactosyl-O-glycosyl-glycoprotein beta-1,3-N-acetylglucosaminyltransferase</fullName>
        <ecNumber evidence="4">2.4.1.146</ecNumber>
    </alternativeName>
    <alternativeName>
        <fullName>Beta-1,3-galactosyltransferase 8</fullName>
        <shortName>Beta-1,3-GalTase 8</shortName>
        <shortName>Beta3Gal-T8</shortName>
        <shortName>Beta3GalT8</shortName>
        <shortName>b3Gal-T8</shortName>
    </alternativeName>
    <alternativeName>
        <fullName>Beta-3-Gx-T8</fullName>
    </alternativeName>
    <alternativeName>
        <fullName evidence="10">Core 1 extending beta-1,3-N-acetylglucosaminyltransferase</fullName>
    </alternativeName>
    <alternativeName>
        <fullName evidence="10">Core1-beta3GlcNAcT</fullName>
    </alternativeName>
    <alternativeName>
        <fullName>Transmembrane protein 3</fullName>
    </alternativeName>
    <alternativeName>
        <fullName>UDP-Gal:beta-GlcNAc beta-1,3-galactosyltransferase 8</fullName>
    </alternativeName>
    <alternativeName>
        <fullName>UDP-GlcNAc:betaGal beta-1,3-N-acetylglucosaminyltransferase 3</fullName>
        <shortName>BGnT-3</shortName>
        <shortName>Beta-1,3-Gn-T3</shortName>
        <shortName>Beta-1,3-N-acetylglucosaminyltransferase 3</shortName>
        <shortName>Beta3Gn-T3</shortName>
    </alternativeName>
    <alternativeName>
        <fullName>UDP-galactose:beta-N-acetylglucosamine beta-1,3-galactosyltransferase 8</fullName>
    </alternativeName>
</protein>
<proteinExistence type="evidence at protein level"/>
<keyword id="KW-0325">Glycoprotein</keyword>
<keyword id="KW-0328">Glycosyltransferase</keyword>
<keyword id="KW-0333">Golgi apparatus</keyword>
<keyword id="KW-0472">Membrane</keyword>
<keyword id="KW-1267">Proteomics identification</keyword>
<keyword id="KW-1185">Reference proteome</keyword>
<keyword id="KW-0735">Signal-anchor</keyword>
<keyword id="KW-0808">Transferase</keyword>
<keyword id="KW-0812">Transmembrane</keyword>
<keyword id="KW-1133">Transmembrane helix</keyword>